<evidence type="ECO:0000255" key="1">
    <source>
        <dbReference type="HAMAP-Rule" id="MF_00418"/>
    </source>
</evidence>
<evidence type="ECO:0000305" key="2"/>
<gene>
    <name evidence="1" type="primary">dapA</name>
    <name type="ordered locus">NE2403</name>
</gene>
<accession>Q82SD7</accession>
<name>DAPA_NITEU</name>
<keyword id="KW-0028">Amino-acid biosynthesis</keyword>
<keyword id="KW-0963">Cytoplasm</keyword>
<keyword id="KW-0220">Diaminopimelate biosynthesis</keyword>
<keyword id="KW-0456">Lyase</keyword>
<keyword id="KW-0457">Lysine biosynthesis</keyword>
<keyword id="KW-1185">Reference proteome</keyword>
<keyword id="KW-0704">Schiff base</keyword>
<comment type="function">
    <text evidence="1">Catalyzes the condensation of (S)-aspartate-beta-semialdehyde [(S)-ASA] and pyruvate to 4-hydroxy-tetrahydrodipicolinate (HTPA).</text>
</comment>
<comment type="catalytic activity">
    <reaction evidence="1">
        <text>L-aspartate 4-semialdehyde + pyruvate = (2S,4S)-4-hydroxy-2,3,4,5-tetrahydrodipicolinate + H2O + H(+)</text>
        <dbReference type="Rhea" id="RHEA:34171"/>
        <dbReference type="ChEBI" id="CHEBI:15361"/>
        <dbReference type="ChEBI" id="CHEBI:15377"/>
        <dbReference type="ChEBI" id="CHEBI:15378"/>
        <dbReference type="ChEBI" id="CHEBI:67139"/>
        <dbReference type="ChEBI" id="CHEBI:537519"/>
        <dbReference type="EC" id="4.3.3.7"/>
    </reaction>
</comment>
<comment type="pathway">
    <text evidence="1">Amino-acid biosynthesis; L-lysine biosynthesis via DAP pathway; (S)-tetrahydrodipicolinate from L-aspartate: step 3/4.</text>
</comment>
<comment type="subunit">
    <text evidence="1">Homotetramer; dimer of dimers.</text>
</comment>
<comment type="subcellular location">
    <subcellularLocation>
        <location evidence="1">Cytoplasm</location>
    </subcellularLocation>
</comment>
<comment type="similarity">
    <text evidence="1">Belongs to the DapA family.</text>
</comment>
<comment type="caution">
    <text evidence="2">Was originally thought to be a dihydrodipicolinate synthase (DHDPS), catalyzing the condensation of (S)-aspartate-beta-semialdehyde [(S)-ASA] and pyruvate to dihydrodipicolinate (DHDP). However, it was shown in E.coli that the product of the enzymatic reaction is not dihydrodipicolinate but in fact (4S)-4-hydroxy-2,3,4,5-tetrahydro-(2S)-dipicolinic acid (HTPA), and that the consecutive dehydration reaction leading to DHDP is not spontaneous but catalyzed by DapB.</text>
</comment>
<organism>
    <name type="scientific">Nitrosomonas europaea (strain ATCC 19718 / CIP 103999 / KCTC 2705 / NBRC 14298)</name>
    <dbReference type="NCBI Taxonomy" id="228410"/>
    <lineage>
        <taxon>Bacteria</taxon>
        <taxon>Pseudomonadati</taxon>
        <taxon>Pseudomonadota</taxon>
        <taxon>Betaproteobacteria</taxon>
        <taxon>Nitrosomonadales</taxon>
        <taxon>Nitrosomonadaceae</taxon>
        <taxon>Nitrosomonas</taxon>
    </lineage>
</organism>
<reference key="1">
    <citation type="journal article" date="2003" name="J. Bacteriol.">
        <title>Complete genome sequence of the ammonia-oxidizing bacterium and obligate chemolithoautotroph Nitrosomonas europaea.</title>
        <authorList>
            <person name="Chain P."/>
            <person name="Lamerdin J.E."/>
            <person name="Larimer F.W."/>
            <person name="Regala W."/>
            <person name="Lao V."/>
            <person name="Land M.L."/>
            <person name="Hauser L."/>
            <person name="Hooper A.B."/>
            <person name="Klotz M.G."/>
            <person name="Norton J."/>
            <person name="Sayavedra-Soto L.A."/>
            <person name="Arciero D.M."/>
            <person name="Hommes N.G."/>
            <person name="Whittaker M.M."/>
            <person name="Arp D.J."/>
        </authorList>
    </citation>
    <scope>NUCLEOTIDE SEQUENCE [LARGE SCALE GENOMIC DNA]</scope>
    <source>
        <strain>ATCC 19718 / CIP 103999 / KCTC 2705 / NBRC 14298</strain>
    </source>
</reference>
<sequence length="292" mass="31338">MFTGSLVAIVTPMLEDGALDLDRFCALIDFHIEQKTDGIVVVGTTGESPTVDFDEHHLLIRTAVTHAAGRIPVIAGTGANSTREAIELTVFSKNAGADACLSVAPYYNKPTQEGLYQHFKAIAEAVDIPMILYNVPGRTVVDISNDTALRLAQIPGIVGIKDATGNIARGCDLLQRVPDNFAVYSGDDATALALLLLGGHGTISVTANVAPRLMHEMCTAAFAGDLARAREINTRLFRLHIDLFVEANPIPVKWAVARMGLINDSLRLPLTALSSQYHELIRKAMLQAGITV</sequence>
<protein>
    <recommendedName>
        <fullName evidence="1">4-hydroxy-tetrahydrodipicolinate synthase</fullName>
        <shortName evidence="1">HTPA synthase</shortName>
        <ecNumber evidence="1">4.3.3.7</ecNumber>
    </recommendedName>
</protein>
<proteinExistence type="inferred from homology"/>
<feature type="chain" id="PRO_1000050231" description="4-hydroxy-tetrahydrodipicolinate synthase">
    <location>
        <begin position="1"/>
        <end position="292"/>
    </location>
</feature>
<feature type="active site" description="Proton donor/acceptor" evidence="1">
    <location>
        <position position="133"/>
    </location>
</feature>
<feature type="active site" description="Schiff-base intermediate with substrate" evidence="1">
    <location>
        <position position="161"/>
    </location>
</feature>
<feature type="binding site" evidence="1">
    <location>
        <position position="45"/>
    </location>
    <ligand>
        <name>pyruvate</name>
        <dbReference type="ChEBI" id="CHEBI:15361"/>
    </ligand>
</feature>
<feature type="binding site" evidence="1">
    <location>
        <position position="203"/>
    </location>
    <ligand>
        <name>pyruvate</name>
        <dbReference type="ChEBI" id="CHEBI:15361"/>
    </ligand>
</feature>
<feature type="site" description="Part of a proton relay during catalysis" evidence="1">
    <location>
        <position position="44"/>
    </location>
</feature>
<feature type="site" description="Part of a proton relay during catalysis" evidence="1">
    <location>
        <position position="107"/>
    </location>
</feature>
<dbReference type="EC" id="4.3.3.7" evidence="1"/>
<dbReference type="EMBL" id="AL954747">
    <property type="protein sequence ID" value="CAD86315.1"/>
    <property type="molecule type" value="Genomic_DNA"/>
</dbReference>
<dbReference type="RefSeq" id="WP_011112876.1">
    <property type="nucleotide sequence ID" value="NC_004757.1"/>
</dbReference>
<dbReference type="SMR" id="Q82SD7"/>
<dbReference type="STRING" id="228410.NE2403"/>
<dbReference type="GeneID" id="87105534"/>
<dbReference type="KEGG" id="neu:NE2403"/>
<dbReference type="eggNOG" id="COG0329">
    <property type="taxonomic scope" value="Bacteria"/>
</dbReference>
<dbReference type="HOGENOM" id="CLU_049343_7_1_4"/>
<dbReference type="OrthoDB" id="9782828at2"/>
<dbReference type="PhylomeDB" id="Q82SD7"/>
<dbReference type="UniPathway" id="UPA00034">
    <property type="reaction ID" value="UER00017"/>
</dbReference>
<dbReference type="Proteomes" id="UP000001416">
    <property type="component" value="Chromosome"/>
</dbReference>
<dbReference type="GO" id="GO:0005829">
    <property type="term" value="C:cytosol"/>
    <property type="evidence" value="ECO:0007669"/>
    <property type="project" value="TreeGrafter"/>
</dbReference>
<dbReference type="GO" id="GO:0008840">
    <property type="term" value="F:4-hydroxy-tetrahydrodipicolinate synthase activity"/>
    <property type="evidence" value="ECO:0007669"/>
    <property type="project" value="UniProtKB-UniRule"/>
</dbReference>
<dbReference type="GO" id="GO:0019877">
    <property type="term" value="P:diaminopimelate biosynthetic process"/>
    <property type="evidence" value="ECO:0007669"/>
    <property type="project" value="UniProtKB-UniRule"/>
</dbReference>
<dbReference type="GO" id="GO:0009089">
    <property type="term" value="P:lysine biosynthetic process via diaminopimelate"/>
    <property type="evidence" value="ECO:0007669"/>
    <property type="project" value="UniProtKB-UniRule"/>
</dbReference>
<dbReference type="CDD" id="cd00950">
    <property type="entry name" value="DHDPS"/>
    <property type="match status" value="1"/>
</dbReference>
<dbReference type="Gene3D" id="3.20.20.70">
    <property type="entry name" value="Aldolase class I"/>
    <property type="match status" value="1"/>
</dbReference>
<dbReference type="HAMAP" id="MF_00418">
    <property type="entry name" value="DapA"/>
    <property type="match status" value="1"/>
</dbReference>
<dbReference type="InterPro" id="IPR013785">
    <property type="entry name" value="Aldolase_TIM"/>
</dbReference>
<dbReference type="InterPro" id="IPR005263">
    <property type="entry name" value="DapA"/>
</dbReference>
<dbReference type="InterPro" id="IPR002220">
    <property type="entry name" value="DapA-like"/>
</dbReference>
<dbReference type="InterPro" id="IPR020625">
    <property type="entry name" value="Schiff_base-form_aldolases_AS"/>
</dbReference>
<dbReference type="InterPro" id="IPR020624">
    <property type="entry name" value="Schiff_base-form_aldolases_CS"/>
</dbReference>
<dbReference type="NCBIfam" id="TIGR00674">
    <property type="entry name" value="dapA"/>
    <property type="match status" value="1"/>
</dbReference>
<dbReference type="PANTHER" id="PTHR12128:SF66">
    <property type="entry name" value="4-HYDROXY-2-OXOGLUTARATE ALDOLASE, MITOCHONDRIAL"/>
    <property type="match status" value="1"/>
</dbReference>
<dbReference type="PANTHER" id="PTHR12128">
    <property type="entry name" value="DIHYDRODIPICOLINATE SYNTHASE"/>
    <property type="match status" value="1"/>
</dbReference>
<dbReference type="Pfam" id="PF00701">
    <property type="entry name" value="DHDPS"/>
    <property type="match status" value="1"/>
</dbReference>
<dbReference type="PIRSF" id="PIRSF001365">
    <property type="entry name" value="DHDPS"/>
    <property type="match status" value="1"/>
</dbReference>
<dbReference type="PRINTS" id="PR00146">
    <property type="entry name" value="DHPICSNTHASE"/>
</dbReference>
<dbReference type="SMART" id="SM01130">
    <property type="entry name" value="DHDPS"/>
    <property type="match status" value="1"/>
</dbReference>
<dbReference type="SUPFAM" id="SSF51569">
    <property type="entry name" value="Aldolase"/>
    <property type="match status" value="1"/>
</dbReference>
<dbReference type="PROSITE" id="PS00665">
    <property type="entry name" value="DHDPS_1"/>
    <property type="match status" value="1"/>
</dbReference>
<dbReference type="PROSITE" id="PS00666">
    <property type="entry name" value="DHDPS_2"/>
    <property type="match status" value="1"/>
</dbReference>